<evidence type="ECO:0000255" key="1">
    <source>
        <dbReference type="HAMAP-Rule" id="MF_01328"/>
    </source>
</evidence>
<evidence type="ECO:0000256" key="2">
    <source>
        <dbReference type="SAM" id="MobiDB-lite"/>
    </source>
</evidence>
<evidence type="ECO:0000305" key="3"/>
<keyword id="KW-1185">Reference proteome</keyword>
<keyword id="KW-0687">Ribonucleoprotein</keyword>
<keyword id="KW-0689">Ribosomal protein</keyword>
<keyword id="KW-0694">RNA-binding</keyword>
<keyword id="KW-0699">rRNA-binding</keyword>
<sequence length="211" mass="23227">MAQAQVFDARTGRRSEMELKGPRFETEPKQHVIHRAVVAELEARRRWTASTRERSEVAGSGAKLYRQKGTGRARAGDIKSPLRHGGGTWGGPKPKGPRYGKKINRKEARAAFDGALSAKAAEGRLYVLDALDFERPSTKRAKELLGQMGVEGPVLLVLDGEEREAALSFRNLPEVTVVGPRGYGVYELLRAREVVFSRAAYGRLTAGREEG</sequence>
<name>RL4_RUBXD</name>
<gene>
    <name evidence="1" type="primary">rplD</name>
    <name type="ordered locus">Rxyl_2154</name>
</gene>
<dbReference type="EMBL" id="CP000386">
    <property type="protein sequence ID" value="ABG05098.1"/>
    <property type="molecule type" value="Genomic_DNA"/>
</dbReference>
<dbReference type="RefSeq" id="WP_011565113.1">
    <property type="nucleotide sequence ID" value="NC_008148.1"/>
</dbReference>
<dbReference type="SMR" id="Q1AU30"/>
<dbReference type="STRING" id="266117.Rxyl_2154"/>
<dbReference type="KEGG" id="rxy:Rxyl_2154"/>
<dbReference type="eggNOG" id="COG0088">
    <property type="taxonomic scope" value="Bacteria"/>
</dbReference>
<dbReference type="HOGENOM" id="CLU_041575_5_2_11"/>
<dbReference type="OrthoDB" id="9803201at2"/>
<dbReference type="PhylomeDB" id="Q1AU30"/>
<dbReference type="Proteomes" id="UP000006637">
    <property type="component" value="Chromosome"/>
</dbReference>
<dbReference type="GO" id="GO:1990904">
    <property type="term" value="C:ribonucleoprotein complex"/>
    <property type="evidence" value="ECO:0007669"/>
    <property type="project" value="UniProtKB-KW"/>
</dbReference>
<dbReference type="GO" id="GO:0005840">
    <property type="term" value="C:ribosome"/>
    <property type="evidence" value="ECO:0007669"/>
    <property type="project" value="UniProtKB-KW"/>
</dbReference>
<dbReference type="GO" id="GO:0019843">
    <property type="term" value="F:rRNA binding"/>
    <property type="evidence" value="ECO:0007669"/>
    <property type="project" value="UniProtKB-UniRule"/>
</dbReference>
<dbReference type="GO" id="GO:0003735">
    <property type="term" value="F:structural constituent of ribosome"/>
    <property type="evidence" value="ECO:0007669"/>
    <property type="project" value="InterPro"/>
</dbReference>
<dbReference type="GO" id="GO:0006412">
    <property type="term" value="P:translation"/>
    <property type="evidence" value="ECO:0007669"/>
    <property type="project" value="UniProtKB-UniRule"/>
</dbReference>
<dbReference type="Gene3D" id="3.40.1370.10">
    <property type="match status" value="1"/>
</dbReference>
<dbReference type="HAMAP" id="MF_01328_B">
    <property type="entry name" value="Ribosomal_uL4_B"/>
    <property type="match status" value="1"/>
</dbReference>
<dbReference type="InterPro" id="IPR002136">
    <property type="entry name" value="Ribosomal_uL4"/>
</dbReference>
<dbReference type="InterPro" id="IPR013005">
    <property type="entry name" value="Ribosomal_uL4-like"/>
</dbReference>
<dbReference type="InterPro" id="IPR023574">
    <property type="entry name" value="Ribosomal_uL4_dom_sf"/>
</dbReference>
<dbReference type="NCBIfam" id="TIGR03953">
    <property type="entry name" value="rplD_bact"/>
    <property type="match status" value="1"/>
</dbReference>
<dbReference type="PANTHER" id="PTHR10746">
    <property type="entry name" value="50S RIBOSOMAL PROTEIN L4"/>
    <property type="match status" value="1"/>
</dbReference>
<dbReference type="PANTHER" id="PTHR10746:SF6">
    <property type="entry name" value="LARGE RIBOSOMAL SUBUNIT PROTEIN UL4M"/>
    <property type="match status" value="1"/>
</dbReference>
<dbReference type="Pfam" id="PF00573">
    <property type="entry name" value="Ribosomal_L4"/>
    <property type="match status" value="1"/>
</dbReference>
<dbReference type="SUPFAM" id="SSF52166">
    <property type="entry name" value="Ribosomal protein L4"/>
    <property type="match status" value="1"/>
</dbReference>
<protein>
    <recommendedName>
        <fullName evidence="1">Large ribosomal subunit protein uL4</fullName>
    </recommendedName>
    <alternativeName>
        <fullName evidence="3">50S ribosomal protein L4</fullName>
    </alternativeName>
</protein>
<feature type="chain" id="PRO_1000052488" description="Large ribosomal subunit protein uL4">
    <location>
        <begin position="1"/>
        <end position="211"/>
    </location>
</feature>
<feature type="region of interest" description="Disordered" evidence="2">
    <location>
        <begin position="1"/>
        <end position="28"/>
    </location>
</feature>
<feature type="region of interest" description="Disordered" evidence="2">
    <location>
        <begin position="48"/>
        <end position="99"/>
    </location>
</feature>
<feature type="compositionally biased region" description="Basic and acidic residues" evidence="2">
    <location>
        <begin position="10"/>
        <end position="28"/>
    </location>
</feature>
<reference key="1">
    <citation type="submission" date="2006-06" db="EMBL/GenBank/DDBJ databases">
        <title>Complete sequence of Rubrobacter xylanophilus DSM 9941.</title>
        <authorList>
            <consortium name="US DOE Joint Genome Institute"/>
            <person name="Copeland A."/>
            <person name="Lucas S."/>
            <person name="Lapidus A."/>
            <person name="Barry K."/>
            <person name="Detter J.C."/>
            <person name="Glavina del Rio T."/>
            <person name="Hammon N."/>
            <person name="Israni S."/>
            <person name="Dalin E."/>
            <person name="Tice H."/>
            <person name="Pitluck S."/>
            <person name="Munk A.C."/>
            <person name="Brettin T."/>
            <person name="Bruce D."/>
            <person name="Han C."/>
            <person name="Tapia R."/>
            <person name="Gilna P."/>
            <person name="Schmutz J."/>
            <person name="Larimer F."/>
            <person name="Land M."/>
            <person name="Hauser L."/>
            <person name="Kyrpides N."/>
            <person name="Lykidis A."/>
            <person name="da Costa M.S."/>
            <person name="Rainey F.A."/>
            <person name="Empadinhas N."/>
            <person name="Jolivet E."/>
            <person name="Battista J.R."/>
            <person name="Richardson P."/>
        </authorList>
    </citation>
    <scope>NUCLEOTIDE SEQUENCE [LARGE SCALE GENOMIC DNA]</scope>
    <source>
        <strain>DSM 9941 / JCM 11954 / NBRC 16129 / PRD-1</strain>
    </source>
</reference>
<comment type="function">
    <text evidence="1">One of the primary rRNA binding proteins, this protein initially binds near the 5'-end of the 23S rRNA. It is important during the early stages of 50S assembly. It makes multiple contacts with different domains of the 23S rRNA in the assembled 50S subunit and ribosome.</text>
</comment>
<comment type="function">
    <text evidence="1">Forms part of the polypeptide exit tunnel.</text>
</comment>
<comment type="subunit">
    <text evidence="1">Part of the 50S ribosomal subunit.</text>
</comment>
<comment type="similarity">
    <text evidence="1">Belongs to the universal ribosomal protein uL4 family.</text>
</comment>
<proteinExistence type="inferred from homology"/>
<accession>Q1AU30</accession>
<organism>
    <name type="scientific">Rubrobacter xylanophilus (strain DSM 9941 / JCM 11954 / NBRC 16129 / PRD-1)</name>
    <dbReference type="NCBI Taxonomy" id="266117"/>
    <lineage>
        <taxon>Bacteria</taxon>
        <taxon>Bacillati</taxon>
        <taxon>Actinomycetota</taxon>
        <taxon>Rubrobacteria</taxon>
        <taxon>Rubrobacterales</taxon>
        <taxon>Rubrobacteraceae</taxon>
        <taxon>Rubrobacter</taxon>
    </lineage>
</organism>